<proteinExistence type="evidence at transcript level"/>
<accession>P34729</accession>
<gene>
    <name type="primary">RAS1</name>
    <name type="synonym">RAS-1</name>
</gene>
<keyword id="KW-1003">Cell membrane</keyword>
<keyword id="KW-0342">GTP-binding</keyword>
<keyword id="KW-0378">Hydrolase</keyword>
<keyword id="KW-0449">Lipoprotein</keyword>
<keyword id="KW-0472">Membrane</keyword>
<keyword id="KW-0488">Methylation</keyword>
<keyword id="KW-0547">Nucleotide-binding</keyword>
<keyword id="KW-0636">Prenylation</keyword>
<sequence>MTEYKLVIVGGGGVGKSALTIQLIQNHFIDEYDPTIEDSYRKQVTIDEETCLLDILDTAGQEEYSAMRDQYMRTGQGFLCVYSITSRSSFDEIASFREQILRVKDKDKVPMIVVGNKCDLEGERQVTTGEGQDLARSFGCPFMETSAKSRVNVEESFYQLVREIRKDSRTDTKGPGGKGGKKTLKCLLL</sequence>
<feature type="chain" id="PRO_0000082682" description="Ras-like protein 1">
    <location>
        <begin position="1"/>
        <end position="186"/>
    </location>
</feature>
<feature type="propeptide" id="PRO_0000281325" description="Removed in mature form" evidence="1">
    <location>
        <begin position="187"/>
        <end position="189"/>
    </location>
</feature>
<feature type="short sequence motif" description="Effector region">
    <location>
        <begin position="32"/>
        <end position="40"/>
    </location>
</feature>
<feature type="binding site" evidence="1">
    <location>
        <begin position="10"/>
        <end position="17"/>
    </location>
    <ligand>
        <name>GTP</name>
        <dbReference type="ChEBI" id="CHEBI:37565"/>
    </ligand>
</feature>
<feature type="binding site" evidence="1">
    <location>
        <begin position="57"/>
        <end position="61"/>
    </location>
    <ligand>
        <name>GTP</name>
        <dbReference type="ChEBI" id="CHEBI:37565"/>
    </ligand>
</feature>
<feature type="binding site" evidence="1">
    <location>
        <begin position="116"/>
        <end position="119"/>
    </location>
    <ligand>
        <name>GTP</name>
        <dbReference type="ChEBI" id="CHEBI:37565"/>
    </ligand>
</feature>
<feature type="modified residue" description="Cysteine methyl ester" evidence="1">
    <location>
        <position position="186"/>
    </location>
</feature>
<feature type="lipid moiety-binding region" description="S-geranylgeranyl cysteine" evidence="1">
    <location>
        <position position="186"/>
    </location>
</feature>
<protein>
    <recommendedName>
        <fullName>Ras-like protein 1</fullName>
        <ecNumber evidence="2">3.6.5.2</ecNumber>
    </recommendedName>
</protein>
<comment type="function">
    <text>Ras proteins bind GDP/GTP and possess intrinsic GTPase activity.</text>
</comment>
<comment type="catalytic activity">
    <reaction evidence="2">
        <text>GTP + H2O = GDP + phosphate + H(+)</text>
        <dbReference type="Rhea" id="RHEA:19669"/>
        <dbReference type="ChEBI" id="CHEBI:15377"/>
        <dbReference type="ChEBI" id="CHEBI:15378"/>
        <dbReference type="ChEBI" id="CHEBI:37565"/>
        <dbReference type="ChEBI" id="CHEBI:43474"/>
        <dbReference type="ChEBI" id="CHEBI:58189"/>
        <dbReference type="EC" id="3.6.5.2"/>
    </reaction>
</comment>
<comment type="subcellular location">
    <subcellularLocation>
        <location>Cell membrane</location>
        <topology>Lipid-anchor</topology>
        <orientation>Cytoplasmic side</orientation>
    </subcellularLocation>
    <text>Inner surface of plasma membrane.</text>
</comment>
<comment type="similarity">
    <text evidence="3">Belongs to the small GTPase superfamily. Ras family.</text>
</comment>
<organism>
    <name type="scientific">Physarum polycephalum</name>
    <name type="common">Slime mold</name>
    <dbReference type="NCBI Taxonomy" id="5791"/>
    <lineage>
        <taxon>Eukaryota</taxon>
        <taxon>Amoebozoa</taxon>
        <taxon>Evosea</taxon>
        <taxon>Eumycetozoa</taxon>
        <taxon>Myxogastria</taxon>
        <taxon>Myxogastromycetidae</taxon>
        <taxon>Physariida</taxon>
        <taxon>Physaraceae</taxon>
        <taxon>Physarum</taxon>
    </lineage>
</organism>
<reference key="1">
    <citation type="journal article" date="1993" name="Biochim. Biophys. Acta">
        <title>Identification of a ras gene in the slime mold Physarum polycephalum.</title>
        <authorList>
            <person name="Kozlowski P."/>
            <person name="Fronk J."/>
            <person name="Toczko K."/>
        </authorList>
    </citation>
    <scope>NUCLEOTIDE SEQUENCE [MRNA]</scope>
    <source>
        <strain>LU352</strain>
    </source>
</reference>
<reference key="2">
    <citation type="journal article" date="1996" name="Gene">
        <title>Cloning and genomic sequence of the Physarum polycephalum Ppras1 gene, a homologue of the ras protooncogene.</title>
        <authorList>
            <person name="Trzcinska-Danielewicz J."/>
            <person name="Kozlowski P."/>
            <person name="Toczko K."/>
        </authorList>
    </citation>
    <scope>NUCLEOTIDE SEQUENCE [GENOMIC DNA]</scope>
    <source>
        <strain>M3CVIII</strain>
    </source>
</reference>
<evidence type="ECO:0000250" key="1"/>
<evidence type="ECO:0000250" key="2">
    <source>
        <dbReference type="UniProtKB" id="P01112"/>
    </source>
</evidence>
<evidence type="ECO:0000305" key="3"/>
<dbReference type="EC" id="3.6.5.2" evidence="2"/>
<dbReference type="EMBL" id="L10344">
    <property type="protein sequence ID" value="AAB05646.1"/>
    <property type="molecule type" value="mRNA"/>
</dbReference>
<dbReference type="EMBL" id="U10905">
    <property type="protein sequence ID" value="AAB06296.1"/>
    <property type="molecule type" value="Genomic_DNA"/>
</dbReference>
<dbReference type="PIR" id="S33796">
    <property type="entry name" value="S33796"/>
</dbReference>
<dbReference type="SMR" id="P34729"/>
<dbReference type="GO" id="GO:0005886">
    <property type="term" value="C:plasma membrane"/>
    <property type="evidence" value="ECO:0007669"/>
    <property type="project" value="UniProtKB-SubCell"/>
</dbReference>
<dbReference type="GO" id="GO:0003925">
    <property type="term" value="F:G protein activity"/>
    <property type="evidence" value="ECO:0007669"/>
    <property type="project" value="UniProtKB-EC"/>
</dbReference>
<dbReference type="GO" id="GO:0005525">
    <property type="term" value="F:GTP binding"/>
    <property type="evidence" value="ECO:0007669"/>
    <property type="project" value="UniProtKB-KW"/>
</dbReference>
<dbReference type="GO" id="GO:0007165">
    <property type="term" value="P:signal transduction"/>
    <property type="evidence" value="ECO:0007669"/>
    <property type="project" value="InterPro"/>
</dbReference>
<dbReference type="CDD" id="cd04138">
    <property type="entry name" value="H_N_K_Ras_like"/>
    <property type="match status" value="1"/>
</dbReference>
<dbReference type="FunFam" id="3.40.50.300:FF:000080">
    <property type="entry name" value="Ras-like GTPase Ras1"/>
    <property type="match status" value="1"/>
</dbReference>
<dbReference type="Gene3D" id="3.40.50.300">
    <property type="entry name" value="P-loop containing nucleotide triphosphate hydrolases"/>
    <property type="match status" value="1"/>
</dbReference>
<dbReference type="InterPro" id="IPR027417">
    <property type="entry name" value="P-loop_NTPase"/>
</dbReference>
<dbReference type="InterPro" id="IPR005225">
    <property type="entry name" value="Small_GTP-bd"/>
</dbReference>
<dbReference type="InterPro" id="IPR001806">
    <property type="entry name" value="Small_GTPase"/>
</dbReference>
<dbReference type="InterPro" id="IPR020849">
    <property type="entry name" value="Small_GTPase_Ras-type"/>
</dbReference>
<dbReference type="NCBIfam" id="TIGR00231">
    <property type="entry name" value="small_GTP"/>
    <property type="match status" value="1"/>
</dbReference>
<dbReference type="PANTHER" id="PTHR24070">
    <property type="entry name" value="RAS, DI-RAS, AND RHEB FAMILY MEMBERS OF SMALL GTPASE SUPERFAMILY"/>
    <property type="match status" value="1"/>
</dbReference>
<dbReference type="Pfam" id="PF00071">
    <property type="entry name" value="Ras"/>
    <property type="match status" value="1"/>
</dbReference>
<dbReference type="PRINTS" id="PR00449">
    <property type="entry name" value="RASTRNSFRMNG"/>
</dbReference>
<dbReference type="SMART" id="SM00175">
    <property type="entry name" value="RAB"/>
    <property type="match status" value="1"/>
</dbReference>
<dbReference type="SMART" id="SM00173">
    <property type="entry name" value="RAS"/>
    <property type="match status" value="1"/>
</dbReference>
<dbReference type="SMART" id="SM00174">
    <property type="entry name" value="RHO"/>
    <property type="match status" value="1"/>
</dbReference>
<dbReference type="SUPFAM" id="SSF52540">
    <property type="entry name" value="P-loop containing nucleoside triphosphate hydrolases"/>
    <property type="match status" value="1"/>
</dbReference>
<dbReference type="PROSITE" id="PS51421">
    <property type="entry name" value="RAS"/>
    <property type="match status" value="1"/>
</dbReference>
<name>RAS1_PHYPO</name>